<organism>
    <name type="scientific">Hemachatus haemachatus</name>
    <name type="common">Rinkhals</name>
    <name type="synonym">Sepedon haemachatus</name>
    <dbReference type="NCBI Taxonomy" id="8626"/>
    <lineage>
        <taxon>Eukaryota</taxon>
        <taxon>Metazoa</taxon>
        <taxon>Chordata</taxon>
        <taxon>Craniata</taxon>
        <taxon>Vertebrata</taxon>
        <taxon>Euteleostomi</taxon>
        <taxon>Lepidosauria</taxon>
        <taxon>Squamata</taxon>
        <taxon>Bifurcata</taxon>
        <taxon>Unidentata</taxon>
        <taxon>Episquamata</taxon>
        <taxon>Toxicofera</taxon>
        <taxon>Serpentes</taxon>
        <taxon>Colubroidea</taxon>
        <taxon>Elapidae</taxon>
        <taxon>Elapinae</taxon>
        <taxon>Hemachatus</taxon>
    </lineage>
</organism>
<feature type="chain" id="PRO_0000093625" description="Weak toxin CM-1c" evidence="2">
    <location>
        <begin position="1"/>
        <end position="61"/>
    </location>
</feature>
<feature type="disulfide bond" evidence="1">
    <location>
        <begin position="3"/>
        <end position="21"/>
    </location>
</feature>
<feature type="disulfide bond" evidence="1">
    <location>
        <begin position="14"/>
        <end position="37"/>
    </location>
</feature>
<feature type="disulfide bond" evidence="1">
    <location>
        <begin position="41"/>
        <end position="53"/>
    </location>
</feature>
<feature type="disulfide bond" evidence="1">
    <location>
        <begin position="54"/>
        <end position="59"/>
    </location>
</feature>
<dbReference type="SMR" id="P25676"/>
<dbReference type="GO" id="GO:0005576">
    <property type="term" value="C:extracellular region"/>
    <property type="evidence" value="ECO:0007669"/>
    <property type="project" value="UniProtKB-SubCell"/>
</dbReference>
<dbReference type="GO" id="GO:0090729">
    <property type="term" value="F:toxin activity"/>
    <property type="evidence" value="ECO:0007669"/>
    <property type="project" value="UniProtKB-KW"/>
</dbReference>
<dbReference type="CDD" id="cd00206">
    <property type="entry name" value="TFP_snake_toxin"/>
    <property type="match status" value="1"/>
</dbReference>
<dbReference type="Gene3D" id="2.10.60.10">
    <property type="entry name" value="CD59"/>
    <property type="match status" value="1"/>
</dbReference>
<dbReference type="InterPro" id="IPR003571">
    <property type="entry name" value="Snake_3FTx"/>
</dbReference>
<dbReference type="InterPro" id="IPR045860">
    <property type="entry name" value="Snake_toxin-like_sf"/>
</dbReference>
<dbReference type="InterPro" id="IPR018354">
    <property type="entry name" value="Snake_toxin_con_site"/>
</dbReference>
<dbReference type="InterPro" id="IPR054131">
    <property type="entry name" value="Toxin_cobra-type"/>
</dbReference>
<dbReference type="Pfam" id="PF21947">
    <property type="entry name" value="Toxin_cobra-type"/>
    <property type="match status" value="1"/>
</dbReference>
<dbReference type="SUPFAM" id="SSF57302">
    <property type="entry name" value="Snake toxin-like"/>
    <property type="match status" value="1"/>
</dbReference>
<dbReference type="PROSITE" id="PS00272">
    <property type="entry name" value="SNAKE_TOXIN"/>
    <property type="match status" value="1"/>
</dbReference>
<accession>P25676</accession>
<keyword id="KW-0903">Direct protein sequencing</keyword>
<keyword id="KW-1015">Disulfide bond</keyword>
<keyword id="KW-0964">Secreted</keyword>
<keyword id="KW-0800">Toxin</keyword>
<sequence>FTCFTTPSDTSETCPIGNNICYEKRWSGHGMQIEKGCVASCPSFESHYKFLLCCRIENCNQ</sequence>
<proteinExistence type="evidence at protein level"/>
<reference key="1">
    <citation type="journal article" date="1979" name="S. Afr. J. Chem.">
        <title>Complete primary structure of toxin CM-1C from Hemachatus haemachatus (Ringhals) venom.</title>
        <authorList>
            <person name="Joubert F.J."/>
            <person name="Taljaard N."/>
        </authorList>
    </citation>
    <scope>PROTEIN SEQUENCE</scope>
    <scope>TOXIC DOSE</scope>
    <scope>SUBCELLULAR LOCATION</scope>
    <source>
        <tissue>Venom</tissue>
    </source>
</reference>
<protein>
    <recommendedName>
        <fullName>Weak toxin CM-1c</fullName>
    </recommendedName>
</protein>
<evidence type="ECO:0000250" key="1">
    <source>
        <dbReference type="UniProtKB" id="P60301"/>
    </source>
</evidence>
<evidence type="ECO:0000269" key="2">
    <source ref="1"/>
</evidence>
<evidence type="ECO:0000305" key="3"/>
<name>3SO61_HEMHA</name>
<comment type="subcellular location">
    <subcellularLocation>
        <location evidence="2">Secreted</location>
    </subcellularLocation>
</comment>
<comment type="tissue specificity">
    <text evidence="3">Expressed by the venom gland.</text>
</comment>
<comment type="toxic dose">
    <text evidence="2">LD(50) is 54 mg/kg by intravenous injection.</text>
</comment>
<comment type="similarity">
    <text evidence="3">Belongs to the three-finger toxin family. Short-chain subfamily. Orphan group VI sub-subfamily.</text>
</comment>